<keyword id="KW-0067">ATP-binding</keyword>
<keyword id="KW-0963">Cytoplasm</keyword>
<keyword id="KW-0418">Kinase</keyword>
<keyword id="KW-0460">Magnesium</keyword>
<keyword id="KW-0479">Metal-binding</keyword>
<keyword id="KW-0546">Nucleotide metabolism</keyword>
<keyword id="KW-0547">Nucleotide-binding</keyword>
<keyword id="KW-0597">Phosphoprotein</keyword>
<keyword id="KW-1185">Reference proteome</keyword>
<keyword id="KW-0808">Transferase</keyword>
<evidence type="ECO:0000255" key="1">
    <source>
        <dbReference type="HAMAP-Rule" id="MF_00451"/>
    </source>
</evidence>
<organism>
    <name type="scientific">Hyperthermus butylicus (strain DSM 5456 / JCM 9403 / PLM1-5)</name>
    <dbReference type="NCBI Taxonomy" id="415426"/>
    <lineage>
        <taxon>Archaea</taxon>
        <taxon>Thermoproteota</taxon>
        <taxon>Thermoprotei</taxon>
        <taxon>Desulfurococcales</taxon>
        <taxon>Pyrodictiaceae</taxon>
        <taxon>Hyperthermus</taxon>
    </lineage>
</organism>
<comment type="function">
    <text evidence="1">Major role in the synthesis of nucleoside triphosphates other than ATP. The ATP gamma phosphate is transferred to the NDP beta phosphate via a ping-pong mechanism, using a phosphorylated active-site intermediate.</text>
</comment>
<comment type="catalytic activity">
    <reaction evidence="1">
        <text>a 2'-deoxyribonucleoside 5'-diphosphate + ATP = a 2'-deoxyribonucleoside 5'-triphosphate + ADP</text>
        <dbReference type="Rhea" id="RHEA:44640"/>
        <dbReference type="ChEBI" id="CHEBI:30616"/>
        <dbReference type="ChEBI" id="CHEBI:61560"/>
        <dbReference type="ChEBI" id="CHEBI:73316"/>
        <dbReference type="ChEBI" id="CHEBI:456216"/>
        <dbReference type="EC" id="2.7.4.6"/>
    </reaction>
</comment>
<comment type="catalytic activity">
    <reaction evidence="1">
        <text>a ribonucleoside 5'-diphosphate + ATP = a ribonucleoside 5'-triphosphate + ADP</text>
        <dbReference type="Rhea" id="RHEA:18113"/>
        <dbReference type="ChEBI" id="CHEBI:30616"/>
        <dbReference type="ChEBI" id="CHEBI:57930"/>
        <dbReference type="ChEBI" id="CHEBI:61557"/>
        <dbReference type="ChEBI" id="CHEBI:456216"/>
        <dbReference type="EC" id="2.7.4.6"/>
    </reaction>
</comment>
<comment type="cofactor">
    <cofactor evidence="1">
        <name>Mg(2+)</name>
        <dbReference type="ChEBI" id="CHEBI:18420"/>
    </cofactor>
</comment>
<comment type="subcellular location">
    <subcellularLocation>
        <location evidence="1">Cytoplasm</location>
    </subcellularLocation>
</comment>
<comment type="similarity">
    <text evidence="1">Belongs to the NDK family.</text>
</comment>
<dbReference type="EC" id="2.7.4.6" evidence="1"/>
<dbReference type="EMBL" id="CP000493">
    <property type="protein sequence ID" value="ABM80409.1"/>
    <property type="molecule type" value="Genomic_DNA"/>
</dbReference>
<dbReference type="RefSeq" id="WP_011821727.1">
    <property type="nucleotide sequence ID" value="NC_008818.1"/>
</dbReference>
<dbReference type="SMR" id="A2BK98"/>
<dbReference type="STRING" id="415426.Hbut_0549"/>
<dbReference type="EnsemblBacteria" id="ABM80409">
    <property type="protein sequence ID" value="ABM80409"/>
    <property type="gene ID" value="Hbut_0549"/>
</dbReference>
<dbReference type="GeneID" id="4782069"/>
<dbReference type="KEGG" id="hbu:Hbut_0549"/>
<dbReference type="eggNOG" id="arCOG04313">
    <property type="taxonomic scope" value="Archaea"/>
</dbReference>
<dbReference type="HOGENOM" id="CLU_060216_6_3_2"/>
<dbReference type="OrthoDB" id="6874at2157"/>
<dbReference type="Proteomes" id="UP000002593">
    <property type="component" value="Chromosome"/>
</dbReference>
<dbReference type="GO" id="GO:0005737">
    <property type="term" value="C:cytoplasm"/>
    <property type="evidence" value="ECO:0007669"/>
    <property type="project" value="UniProtKB-SubCell"/>
</dbReference>
<dbReference type="GO" id="GO:0005524">
    <property type="term" value="F:ATP binding"/>
    <property type="evidence" value="ECO:0007669"/>
    <property type="project" value="UniProtKB-UniRule"/>
</dbReference>
<dbReference type="GO" id="GO:0046872">
    <property type="term" value="F:metal ion binding"/>
    <property type="evidence" value="ECO:0007669"/>
    <property type="project" value="UniProtKB-KW"/>
</dbReference>
<dbReference type="GO" id="GO:0004550">
    <property type="term" value="F:nucleoside diphosphate kinase activity"/>
    <property type="evidence" value="ECO:0007669"/>
    <property type="project" value="UniProtKB-UniRule"/>
</dbReference>
<dbReference type="GO" id="GO:0006241">
    <property type="term" value="P:CTP biosynthetic process"/>
    <property type="evidence" value="ECO:0007669"/>
    <property type="project" value="UniProtKB-UniRule"/>
</dbReference>
<dbReference type="GO" id="GO:0006183">
    <property type="term" value="P:GTP biosynthetic process"/>
    <property type="evidence" value="ECO:0007669"/>
    <property type="project" value="UniProtKB-UniRule"/>
</dbReference>
<dbReference type="GO" id="GO:0006228">
    <property type="term" value="P:UTP biosynthetic process"/>
    <property type="evidence" value="ECO:0007669"/>
    <property type="project" value="UniProtKB-UniRule"/>
</dbReference>
<dbReference type="CDD" id="cd04413">
    <property type="entry name" value="NDPk_I"/>
    <property type="match status" value="1"/>
</dbReference>
<dbReference type="FunFam" id="3.30.70.141:FF:000003">
    <property type="entry name" value="Nucleoside diphosphate kinase"/>
    <property type="match status" value="1"/>
</dbReference>
<dbReference type="Gene3D" id="3.30.70.141">
    <property type="entry name" value="Nucleoside diphosphate kinase-like domain"/>
    <property type="match status" value="1"/>
</dbReference>
<dbReference type="HAMAP" id="MF_00451">
    <property type="entry name" value="NDP_kinase"/>
    <property type="match status" value="1"/>
</dbReference>
<dbReference type="InterPro" id="IPR034907">
    <property type="entry name" value="NDK-like_dom"/>
</dbReference>
<dbReference type="InterPro" id="IPR036850">
    <property type="entry name" value="NDK-like_dom_sf"/>
</dbReference>
<dbReference type="InterPro" id="IPR001564">
    <property type="entry name" value="Nucleoside_diP_kinase"/>
</dbReference>
<dbReference type="InterPro" id="IPR023005">
    <property type="entry name" value="Nucleoside_diP_kinase_AS"/>
</dbReference>
<dbReference type="NCBIfam" id="NF001908">
    <property type="entry name" value="PRK00668.1"/>
    <property type="match status" value="1"/>
</dbReference>
<dbReference type="PANTHER" id="PTHR11349">
    <property type="entry name" value="NUCLEOSIDE DIPHOSPHATE KINASE"/>
    <property type="match status" value="1"/>
</dbReference>
<dbReference type="Pfam" id="PF00334">
    <property type="entry name" value="NDK"/>
    <property type="match status" value="1"/>
</dbReference>
<dbReference type="PRINTS" id="PR01243">
    <property type="entry name" value="NUCDPKINASE"/>
</dbReference>
<dbReference type="SMART" id="SM00562">
    <property type="entry name" value="NDK"/>
    <property type="match status" value="1"/>
</dbReference>
<dbReference type="SUPFAM" id="SSF54919">
    <property type="entry name" value="Nucleoside diphosphate kinase, NDK"/>
    <property type="match status" value="1"/>
</dbReference>
<dbReference type="PROSITE" id="PS00469">
    <property type="entry name" value="NDPK"/>
    <property type="match status" value="1"/>
</dbReference>
<dbReference type="PROSITE" id="PS51374">
    <property type="entry name" value="NDPK_LIKE"/>
    <property type="match status" value="1"/>
</dbReference>
<name>NDK_HYPBU</name>
<protein>
    <recommendedName>
        <fullName evidence="1">Nucleoside diphosphate kinase</fullName>
        <shortName evidence="1">NDK</shortName>
        <shortName evidence="1">NDP kinase</shortName>
        <ecNumber evidence="1">2.7.4.6</ecNumber>
    </recommendedName>
    <alternativeName>
        <fullName evidence="1">Nucleoside-2-P kinase</fullName>
    </alternativeName>
</protein>
<reference key="1">
    <citation type="journal article" date="2007" name="Archaea">
        <title>The genome of Hyperthermus butylicus: a sulfur-reducing, peptide fermenting, neutrophilic Crenarchaeote growing up to 108 degrees C.</title>
        <authorList>
            <person name="Bruegger K."/>
            <person name="Chen L."/>
            <person name="Stark M."/>
            <person name="Zibat A."/>
            <person name="Redder P."/>
            <person name="Ruepp A."/>
            <person name="Awayez M."/>
            <person name="She Q."/>
            <person name="Garrett R.A."/>
            <person name="Klenk H.-P."/>
        </authorList>
    </citation>
    <scope>NUCLEOTIDE SEQUENCE [LARGE SCALE GENOMIC DNA]</scope>
    <source>
        <strain>DSM 5456 / JCM 9403 / PLM1-5</strain>
    </source>
</reference>
<proteinExistence type="inferred from homology"/>
<accession>A2BK98</accession>
<feature type="chain" id="PRO_1000026241" description="Nucleoside diphosphate kinase">
    <location>
        <begin position="1"/>
        <end position="142"/>
    </location>
</feature>
<feature type="active site" description="Pros-phosphohistidine intermediate" evidence="1">
    <location>
        <position position="117"/>
    </location>
</feature>
<feature type="binding site" evidence="1">
    <location>
        <position position="11"/>
    </location>
    <ligand>
        <name>ATP</name>
        <dbReference type="ChEBI" id="CHEBI:30616"/>
    </ligand>
</feature>
<feature type="binding site" evidence="1">
    <location>
        <position position="59"/>
    </location>
    <ligand>
        <name>ATP</name>
        <dbReference type="ChEBI" id="CHEBI:30616"/>
    </ligand>
</feature>
<feature type="binding site" evidence="1">
    <location>
        <position position="87"/>
    </location>
    <ligand>
        <name>ATP</name>
        <dbReference type="ChEBI" id="CHEBI:30616"/>
    </ligand>
</feature>
<feature type="binding site" evidence="1">
    <location>
        <position position="93"/>
    </location>
    <ligand>
        <name>ATP</name>
        <dbReference type="ChEBI" id="CHEBI:30616"/>
    </ligand>
</feature>
<feature type="binding site" evidence="1">
    <location>
        <position position="104"/>
    </location>
    <ligand>
        <name>ATP</name>
        <dbReference type="ChEBI" id="CHEBI:30616"/>
    </ligand>
</feature>
<feature type="binding site" evidence="1">
    <location>
        <position position="114"/>
    </location>
    <ligand>
        <name>ATP</name>
        <dbReference type="ChEBI" id="CHEBI:30616"/>
    </ligand>
</feature>
<sequence>MPVERTFVMIKPDGVKRGLVGEIIARFERKGLKIKALKMKWLTREEAEKLYEVHRGKPFFEDLVNFVTSGPVVAMILEGDSAIEVVRLMIGPTDGRKAPPGTIRGDYALDIGANVIHASDSKESYEREYKVFFSDDEIVGDY</sequence>
<gene>
    <name evidence="1" type="primary">ndk</name>
    <name type="ordered locus">Hbut_0549</name>
</gene>